<gene>
    <name evidence="1" type="primary">glmM</name>
    <name type="ordered locus">Asuc_1422</name>
</gene>
<sequence length="444" mass="47437">MAERKYFGTDGVRGKVGSFPITPDFALKLGWAAGKVLATHGSKKVLIGKDTRISGYMLESALEAGLTAAGLSAVFVGPMPTPAVAYLTRTFRAEAGVVISASHNPYDDNGIKFFSAEGTKLPDDVEEAIEALLEQPMDCVESAELGKASRINDAAGRYIEFCKSTFPTSLSLEGYKIVVDCAHGATYHIAPSVLRELGAEIIEIGTKPNGLNINEKCGATDIEALRHKVLEIGADVGLAYDGDGDRIMMVDHLGNKVDGDQILYIIARETLRAGHLKGGVVGTLMSNMSLEIALKQLGIPFLRANVGDRYVLEKMQENGWKLGGENSGHIIILDKNTTGDGIIASLAVLTAMAQHKLSLHELTGAVKLFPQVLINVRFAGGENPLNSEKVKAVAAEVEQRLAGKGRILLRKSGTEPLIRVMVECEDAVLAQKSAEEIAEAVKNS</sequence>
<name>GLMM_ACTSZ</name>
<organism>
    <name type="scientific">Actinobacillus succinogenes (strain ATCC 55618 / DSM 22257 / CCUG 43843 / 130Z)</name>
    <dbReference type="NCBI Taxonomy" id="339671"/>
    <lineage>
        <taxon>Bacteria</taxon>
        <taxon>Pseudomonadati</taxon>
        <taxon>Pseudomonadota</taxon>
        <taxon>Gammaproteobacteria</taxon>
        <taxon>Pasteurellales</taxon>
        <taxon>Pasteurellaceae</taxon>
        <taxon>Actinobacillus</taxon>
    </lineage>
</organism>
<reference key="1">
    <citation type="journal article" date="2010" name="BMC Genomics">
        <title>A genomic perspective on the potential of Actinobacillus succinogenes for industrial succinate production.</title>
        <authorList>
            <person name="McKinlay J.B."/>
            <person name="Laivenieks M."/>
            <person name="Schindler B.D."/>
            <person name="McKinlay A.A."/>
            <person name="Siddaramappa S."/>
            <person name="Challacombe J.F."/>
            <person name="Lowry S.R."/>
            <person name="Clum A."/>
            <person name="Lapidus A.L."/>
            <person name="Burkhart K.B."/>
            <person name="Harkins V."/>
            <person name="Vieille C."/>
        </authorList>
    </citation>
    <scope>NUCLEOTIDE SEQUENCE [LARGE SCALE GENOMIC DNA]</scope>
    <source>
        <strain>ATCC 55618 / DSM 22257 / CCUG 43843 / 130Z</strain>
    </source>
</reference>
<protein>
    <recommendedName>
        <fullName evidence="1">Phosphoglucosamine mutase</fullName>
        <ecNumber evidence="1">5.4.2.10</ecNumber>
    </recommendedName>
</protein>
<proteinExistence type="inferred from homology"/>
<dbReference type="EC" id="5.4.2.10" evidence="1"/>
<dbReference type="EMBL" id="CP000746">
    <property type="protein sequence ID" value="ABR74781.1"/>
    <property type="molecule type" value="Genomic_DNA"/>
</dbReference>
<dbReference type="RefSeq" id="WP_012073158.1">
    <property type="nucleotide sequence ID" value="NC_009655.1"/>
</dbReference>
<dbReference type="SMR" id="A6VP84"/>
<dbReference type="STRING" id="339671.Asuc_1422"/>
<dbReference type="KEGG" id="asu:Asuc_1422"/>
<dbReference type="eggNOG" id="COG1109">
    <property type="taxonomic scope" value="Bacteria"/>
</dbReference>
<dbReference type="HOGENOM" id="CLU_016950_7_0_6"/>
<dbReference type="OrthoDB" id="9803322at2"/>
<dbReference type="Proteomes" id="UP000001114">
    <property type="component" value="Chromosome"/>
</dbReference>
<dbReference type="GO" id="GO:0005829">
    <property type="term" value="C:cytosol"/>
    <property type="evidence" value="ECO:0007669"/>
    <property type="project" value="TreeGrafter"/>
</dbReference>
<dbReference type="GO" id="GO:0000287">
    <property type="term" value="F:magnesium ion binding"/>
    <property type="evidence" value="ECO:0007669"/>
    <property type="project" value="UniProtKB-UniRule"/>
</dbReference>
<dbReference type="GO" id="GO:0008966">
    <property type="term" value="F:phosphoglucosamine mutase activity"/>
    <property type="evidence" value="ECO:0007669"/>
    <property type="project" value="UniProtKB-UniRule"/>
</dbReference>
<dbReference type="GO" id="GO:0004615">
    <property type="term" value="F:phosphomannomutase activity"/>
    <property type="evidence" value="ECO:0007669"/>
    <property type="project" value="TreeGrafter"/>
</dbReference>
<dbReference type="GO" id="GO:0005975">
    <property type="term" value="P:carbohydrate metabolic process"/>
    <property type="evidence" value="ECO:0007669"/>
    <property type="project" value="InterPro"/>
</dbReference>
<dbReference type="GO" id="GO:0009252">
    <property type="term" value="P:peptidoglycan biosynthetic process"/>
    <property type="evidence" value="ECO:0007669"/>
    <property type="project" value="TreeGrafter"/>
</dbReference>
<dbReference type="GO" id="GO:0006048">
    <property type="term" value="P:UDP-N-acetylglucosamine biosynthetic process"/>
    <property type="evidence" value="ECO:0007669"/>
    <property type="project" value="TreeGrafter"/>
</dbReference>
<dbReference type="CDD" id="cd05802">
    <property type="entry name" value="GlmM"/>
    <property type="match status" value="1"/>
</dbReference>
<dbReference type="FunFam" id="3.30.310.50:FF:000001">
    <property type="entry name" value="Phosphoglucosamine mutase"/>
    <property type="match status" value="1"/>
</dbReference>
<dbReference type="FunFam" id="3.40.120.10:FF:000001">
    <property type="entry name" value="Phosphoglucosamine mutase"/>
    <property type="match status" value="1"/>
</dbReference>
<dbReference type="FunFam" id="3.40.120.10:FF:000002">
    <property type="entry name" value="Phosphoglucosamine mutase"/>
    <property type="match status" value="1"/>
</dbReference>
<dbReference type="Gene3D" id="3.40.120.10">
    <property type="entry name" value="Alpha-D-Glucose-1,6-Bisphosphate, subunit A, domain 3"/>
    <property type="match status" value="3"/>
</dbReference>
<dbReference type="Gene3D" id="3.30.310.50">
    <property type="entry name" value="Alpha-D-phosphohexomutase, C-terminal domain"/>
    <property type="match status" value="1"/>
</dbReference>
<dbReference type="HAMAP" id="MF_01554_B">
    <property type="entry name" value="GlmM_B"/>
    <property type="match status" value="1"/>
</dbReference>
<dbReference type="InterPro" id="IPR005844">
    <property type="entry name" value="A-D-PHexomutase_a/b/a-I"/>
</dbReference>
<dbReference type="InterPro" id="IPR016055">
    <property type="entry name" value="A-D-PHexomutase_a/b/a-I/II/III"/>
</dbReference>
<dbReference type="InterPro" id="IPR005845">
    <property type="entry name" value="A-D-PHexomutase_a/b/a-II"/>
</dbReference>
<dbReference type="InterPro" id="IPR005846">
    <property type="entry name" value="A-D-PHexomutase_a/b/a-III"/>
</dbReference>
<dbReference type="InterPro" id="IPR005843">
    <property type="entry name" value="A-D-PHexomutase_C"/>
</dbReference>
<dbReference type="InterPro" id="IPR036900">
    <property type="entry name" value="A-D-PHexomutase_C_sf"/>
</dbReference>
<dbReference type="InterPro" id="IPR016066">
    <property type="entry name" value="A-D-PHexomutase_CS"/>
</dbReference>
<dbReference type="InterPro" id="IPR005841">
    <property type="entry name" value="Alpha-D-phosphohexomutase_SF"/>
</dbReference>
<dbReference type="InterPro" id="IPR006352">
    <property type="entry name" value="GlmM_bact"/>
</dbReference>
<dbReference type="InterPro" id="IPR050060">
    <property type="entry name" value="Phosphoglucosamine_mutase"/>
</dbReference>
<dbReference type="NCBIfam" id="TIGR01455">
    <property type="entry name" value="glmM"/>
    <property type="match status" value="1"/>
</dbReference>
<dbReference type="NCBIfam" id="NF008139">
    <property type="entry name" value="PRK10887.1"/>
    <property type="match status" value="1"/>
</dbReference>
<dbReference type="PANTHER" id="PTHR42946:SF1">
    <property type="entry name" value="PHOSPHOGLUCOMUTASE (ALPHA-D-GLUCOSE-1,6-BISPHOSPHATE-DEPENDENT)"/>
    <property type="match status" value="1"/>
</dbReference>
<dbReference type="PANTHER" id="PTHR42946">
    <property type="entry name" value="PHOSPHOHEXOSE MUTASE"/>
    <property type="match status" value="1"/>
</dbReference>
<dbReference type="Pfam" id="PF02878">
    <property type="entry name" value="PGM_PMM_I"/>
    <property type="match status" value="1"/>
</dbReference>
<dbReference type="Pfam" id="PF02879">
    <property type="entry name" value="PGM_PMM_II"/>
    <property type="match status" value="1"/>
</dbReference>
<dbReference type="Pfam" id="PF02880">
    <property type="entry name" value="PGM_PMM_III"/>
    <property type="match status" value="1"/>
</dbReference>
<dbReference type="Pfam" id="PF00408">
    <property type="entry name" value="PGM_PMM_IV"/>
    <property type="match status" value="1"/>
</dbReference>
<dbReference type="PRINTS" id="PR00509">
    <property type="entry name" value="PGMPMM"/>
</dbReference>
<dbReference type="SUPFAM" id="SSF55957">
    <property type="entry name" value="Phosphoglucomutase, C-terminal domain"/>
    <property type="match status" value="1"/>
</dbReference>
<dbReference type="SUPFAM" id="SSF53738">
    <property type="entry name" value="Phosphoglucomutase, first 3 domains"/>
    <property type="match status" value="3"/>
</dbReference>
<dbReference type="PROSITE" id="PS00710">
    <property type="entry name" value="PGM_PMM"/>
    <property type="match status" value="1"/>
</dbReference>
<comment type="function">
    <text evidence="1">Catalyzes the conversion of glucosamine-6-phosphate to glucosamine-1-phosphate.</text>
</comment>
<comment type="catalytic activity">
    <reaction evidence="1">
        <text>alpha-D-glucosamine 1-phosphate = D-glucosamine 6-phosphate</text>
        <dbReference type="Rhea" id="RHEA:23424"/>
        <dbReference type="ChEBI" id="CHEBI:58516"/>
        <dbReference type="ChEBI" id="CHEBI:58725"/>
        <dbReference type="EC" id="5.4.2.10"/>
    </reaction>
</comment>
<comment type="cofactor">
    <cofactor evidence="1">
        <name>Mg(2+)</name>
        <dbReference type="ChEBI" id="CHEBI:18420"/>
    </cofactor>
    <text evidence="1">Binds 1 Mg(2+) ion per subunit.</text>
</comment>
<comment type="PTM">
    <text evidence="1">Activated by phosphorylation.</text>
</comment>
<comment type="similarity">
    <text evidence="1">Belongs to the phosphohexose mutase family.</text>
</comment>
<evidence type="ECO:0000255" key="1">
    <source>
        <dbReference type="HAMAP-Rule" id="MF_01554"/>
    </source>
</evidence>
<accession>A6VP84</accession>
<keyword id="KW-0413">Isomerase</keyword>
<keyword id="KW-0460">Magnesium</keyword>
<keyword id="KW-0479">Metal-binding</keyword>
<keyword id="KW-0597">Phosphoprotein</keyword>
<keyword id="KW-1185">Reference proteome</keyword>
<feature type="chain" id="PRO_1000073568" description="Phosphoglucosamine mutase">
    <location>
        <begin position="1"/>
        <end position="444"/>
    </location>
</feature>
<feature type="active site" description="Phosphoserine intermediate" evidence="1">
    <location>
        <position position="102"/>
    </location>
</feature>
<feature type="binding site" description="via phosphate group" evidence="1">
    <location>
        <position position="102"/>
    </location>
    <ligand>
        <name>Mg(2+)</name>
        <dbReference type="ChEBI" id="CHEBI:18420"/>
    </ligand>
</feature>
<feature type="binding site" evidence="1">
    <location>
        <position position="241"/>
    </location>
    <ligand>
        <name>Mg(2+)</name>
        <dbReference type="ChEBI" id="CHEBI:18420"/>
    </ligand>
</feature>
<feature type="binding site" evidence="1">
    <location>
        <position position="243"/>
    </location>
    <ligand>
        <name>Mg(2+)</name>
        <dbReference type="ChEBI" id="CHEBI:18420"/>
    </ligand>
</feature>
<feature type="binding site" evidence="1">
    <location>
        <position position="245"/>
    </location>
    <ligand>
        <name>Mg(2+)</name>
        <dbReference type="ChEBI" id="CHEBI:18420"/>
    </ligand>
</feature>
<feature type="modified residue" description="Phosphoserine" evidence="1">
    <location>
        <position position="102"/>
    </location>
</feature>